<name>Y4038_BORPA</name>
<proteinExistence type="inferred from homology"/>
<feature type="chain" id="PRO_0000107692" description="Nucleotide-binding protein BPP4038">
    <location>
        <begin position="1"/>
        <end position="290"/>
    </location>
</feature>
<feature type="binding site" evidence="1">
    <location>
        <begin position="9"/>
        <end position="16"/>
    </location>
    <ligand>
        <name>ATP</name>
        <dbReference type="ChEBI" id="CHEBI:30616"/>
    </ligand>
</feature>
<feature type="binding site" evidence="1">
    <location>
        <begin position="58"/>
        <end position="61"/>
    </location>
    <ligand>
        <name>GTP</name>
        <dbReference type="ChEBI" id="CHEBI:37565"/>
    </ligand>
</feature>
<reference key="1">
    <citation type="journal article" date="2003" name="Nat. Genet.">
        <title>Comparative analysis of the genome sequences of Bordetella pertussis, Bordetella parapertussis and Bordetella bronchiseptica.</title>
        <authorList>
            <person name="Parkhill J."/>
            <person name="Sebaihia M."/>
            <person name="Preston A."/>
            <person name="Murphy L.D."/>
            <person name="Thomson N.R."/>
            <person name="Harris D.E."/>
            <person name="Holden M.T.G."/>
            <person name="Churcher C.M."/>
            <person name="Bentley S.D."/>
            <person name="Mungall K.L."/>
            <person name="Cerdeno-Tarraga A.-M."/>
            <person name="Temple L."/>
            <person name="James K.D."/>
            <person name="Harris B."/>
            <person name="Quail M.A."/>
            <person name="Achtman M."/>
            <person name="Atkin R."/>
            <person name="Baker S."/>
            <person name="Basham D."/>
            <person name="Bason N."/>
            <person name="Cherevach I."/>
            <person name="Chillingworth T."/>
            <person name="Collins M."/>
            <person name="Cronin A."/>
            <person name="Davis P."/>
            <person name="Doggett J."/>
            <person name="Feltwell T."/>
            <person name="Goble A."/>
            <person name="Hamlin N."/>
            <person name="Hauser H."/>
            <person name="Holroyd S."/>
            <person name="Jagels K."/>
            <person name="Leather S."/>
            <person name="Moule S."/>
            <person name="Norberczak H."/>
            <person name="O'Neil S."/>
            <person name="Ormond D."/>
            <person name="Price C."/>
            <person name="Rabbinowitsch E."/>
            <person name="Rutter S."/>
            <person name="Sanders M."/>
            <person name="Saunders D."/>
            <person name="Seeger K."/>
            <person name="Sharp S."/>
            <person name="Simmonds M."/>
            <person name="Skelton J."/>
            <person name="Squares R."/>
            <person name="Squares S."/>
            <person name="Stevens K."/>
            <person name="Unwin L."/>
            <person name="Whitehead S."/>
            <person name="Barrell B.G."/>
            <person name="Maskell D.J."/>
        </authorList>
    </citation>
    <scope>NUCLEOTIDE SEQUENCE [LARGE SCALE GENOMIC DNA]</scope>
    <source>
        <strain>12822 / ATCC BAA-587 / NCTC 13253</strain>
    </source>
</reference>
<sequence>MLRVVLITGISGSGKSVALRLLEDAGFTCIDNLPVRFLAEFIANARDDAMERVAVAIDVRSPGELAELPDVITASRAMGTSLSVIFLDANTDTLVQRYSESRRRHPLTDRLARGGKTPSLAECIALERELMAPLRDQEHVIDTSDLTPGQLRAWIRDLIQADRPPLVLTFESFAYKRGVPSDADLMFDVRCLPNPYYDRTLRPLTGRDEPVATWLGGFDIVTQMIDDIAAFIRRWLPQYTQDTRNYLTVAIGCTGGQHRSVYVVEQLARRFSDHDPLLVRHRTQLPDDPA</sequence>
<protein>
    <recommendedName>
        <fullName evidence="1">Nucleotide-binding protein BPP4038</fullName>
    </recommendedName>
</protein>
<evidence type="ECO:0000255" key="1">
    <source>
        <dbReference type="HAMAP-Rule" id="MF_00636"/>
    </source>
</evidence>
<accession>Q7W3J5</accession>
<dbReference type="EMBL" id="BX640435">
    <property type="protein sequence ID" value="CAE39321.1"/>
    <property type="molecule type" value="Genomic_DNA"/>
</dbReference>
<dbReference type="SMR" id="Q7W3J5"/>
<dbReference type="KEGG" id="bpa:BPP4038"/>
<dbReference type="HOGENOM" id="CLU_059558_1_1_4"/>
<dbReference type="Proteomes" id="UP000001421">
    <property type="component" value="Chromosome"/>
</dbReference>
<dbReference type="GO" id="GO:0005524">
    <property type="term" value="F:ATP binding"/>
    <property type="evidence" value="ECO:0007669"/>
    <property type="project" value="UniProtKB-UniRule"/>
</dbReference>
<dbReference type="GO" id="GO:0005525">
    <property type="term" value="F:GTP binding"/>
    <property type="evidence" value="ECO:0007669"/>
    <property type="project" value="UniProtKB-UniRule"/>
</dbReference>
<dbReference type="Gene3D" id="3.40.50.300">
    <property type="entry name" value="P-loop containing nucleotide triphosphate hydrolases"/>
    <property type="match status" value="1"/>
</dbReference>
<dbReference type="HAMAP" id="MF_00636">
    <property type="entry name" value="RapZ_like"/>
    <property type="match status" value="1"/>
</dbReference>
<dbReference type="InterPro" id="IPR027417">
    <property type="entry name" value="P-loop_NTPase"/>
</dbReference>
<dbReference type="InterPro" id="IPR005337">
    <property type="entry name" value="RapZ-like"/>
</dbReference>
<dbReference type="InterPro" id="IPR053930">
    <property type="entry name" value="RapZ-like_N"/>
</dbReference>
<dbReference type="InterPro" id="IPR053931">
    <property type="entry name" value="RapZ_C"/>
</dbReference>
<dbReference type="NCBIfam" id="NF003828">
    <property type="entry name" value="PRK05416.1"/>
    <property type="match status" value="1"/>
</dbReference>
<dbReference type="PANTHER" id="PTHR30448">
    <property type="entry name" value="RNASE ADAPTER PROTEIN RAPZ"/>
    <property type="match status" value="1"/>
</dbReference>
<dbReference type="PANTHER" id="PTHR30448:SF0">
    <property type="entry name" value="RNASE ADAPTER PROTEIN RAPZ"/>
    <property type="match status" value="1"/>
</dbReference>
<dbReference type="Pfam" id="PF22740">
    <property type="entry name" value="PapZ_C"/>
    <property type="match status" value="1"/>
</dbReference>
<dbReference type="Pfam" id="PF03668">
    <property type="entry name" value="RapZ-like_N"/>
    <property type="match status" value="1"/>
</dbReference>
<dbReference type="PIRSF" id="PIRSF005052">
    <property type="entry name" value="P-loopkin"/>
    <property type="match status" value="1"/>
</dbReference>
<dbReference type="SUPFAM" id="SSF52540">
    <property type="entry name" value="P-loop containing nucleoside triphosphate hydrolases"/>
    <property type="match status" value="1"/>
</dbReference>
<keyword id="KW-0067">ATP-binding</keyword>
<keyword id="KW-0342">GTP-binding</keyword>
<keyword id="KW-0547">Nucleotide-binding</keyword>
<comment type="function">
    <text evidence="1">Displays ATPase and GTPase activities.</text>
</comment>
<comment type="similarity">
    <text evidence="1">Belongs to the RapZ-like family.</text>
</comment>
<organism>
    <name type="scientific">Bordetella parapertussis (strain 12822 / ATCC BAA-587 / NCTC 13253)</name>
    <dbReference type="NCBI Taxonomy" id="257311"/>
    <lineage>
        <taxon>Bacteria</taxon>
        <taxon>Pseudomonadati</taxon>
        <taxon>Pseudomonadota</taxon>
        <taxon>Betaproteobacteria</taxon>
        <taxon>Burkholderiales</taxon>
        <taxon>Alcaligenaceae</taxon>
        <taxon>Bordetella</taxon>
    </lineage>
</organism>
<gene>
    <name type="ordered locus">BPP4038</name>
</gene>